<keyword id="KW-0066">ATP synthesis</keyword>
<keyword id="KW-0067">ATP-binding</keyword>
<keyword id="KW-0139">CF(1)</keyword>
<keyword id="KW-0150">Chloroplast</keyword>
<keyword id="KW-0375">Hydrogen ion transport</keyword>
<keyword id="KW-0406">Ion transport</keyword>
<keyword id="KW-0472">Membrane</keyword>
<keyword id="KW-0547">Nucleotide-binding</keyword>
<keyword id="KW-0934">Plastid</keyword>
<keyword id="KW-0793">Thylakoid</keyword>
<keyword id="KW-1278">Translocase</keyword>
<keyword id="KW-0813">Transport</keyword>
<accession>O03069</accession>
<gene>
    <name evidence="1" type="primary">atpB</name>
</gene>
<feature type="chain" id="PRO_0000144512" description="ATP synthase subunit beta, chloroplastic">
    <location>
        <begin position="1" status="less than"/>
        <end position="473" status="greater than"/>
    </location>
</feature>
<feature type="binding site" evidence="1">
    <location>
        <begin position="172"/>
        <end position="179"/>
    </location>
    <ligand>
        <name>ATP</name>
        <dbReference type="ChEBI" id="CHEBI:30616"/>
    </ligand>
</feature>
<feature type="non-terminal residue">
    <location>
        <position position="1"/>
    </location>
</feature>
<feature type="non-terminal residue">
    <location>
        <position position="473"/>
    </location>
</feature>
<geneLocation type="chloroplast"/>
<name>ATPB_EQUAR</name>
<sequence length="473" mass="51189">AFENKLMKNYRFLGISTSSEGYITQIIGPVLDVAFPVGKMPNIFNSFIVKGQNPAGQSINVTCEVQQLLGNNKVRAVAMSATDGLMRGMEVIDTGAPLSVPVGEVTLGRIFNVLGEPVDNMGPVEATAKSPIHKPAPAFMDLETTVSIFETGIKVVDLLAPYRRGGKIGLFGGAGVGKTVLIMELINNIAKAHGGVSVFGGVGERTREGNDLYMEMKESKVINEENISESKVALVYGQMNEPPGARMRVGLTALTMAEYFRDVNKQDVLLFIDNIFRFVQAGSEVSALLGRMPSAVGYQPTLATEMGCLQERITSTKEGSITSIQAVYVPADDLTDPAPATTFAHLDATTVLSRGLAAKGIYPAVDPLDSTSTVLQPWIVGEEHYEVAQGVKQTLQRYKELQDIIAILGLDELSEQDRLLVARARKIERFLSQPFFVAEVFTGSPGKYVSLNETIRGFQNDFTGELDSLPEQA</sequence>
<comment type="function">
    <text evidence="1">Produces ATP from ADP in the presence of a proton gradient across the membrane. The catalytic sites are hosted primarily by the beta subunits.</text>
</comment>
<comment type="catalytic activity">
    <reaction evidence="1">
        <text>ATP + H2O + 4 H(+)(in) = ADP + phosphate + 5 H(+)(out)</text>
        <dbReference type="Rhea" id="RHEA:57720"/>
        <dbReference type="ChEBI" id="CHEBI:15377"/>
        <dbReference type="ChEBI" id="CHEBI:15378"/>
        <dbReference type="ChEBI" id="CHEBI:30616"/>
        <dbReference type="ChEBI" id="CHEBI:43474"/>
        <dbReference type="ChEBI" id="CHEBI:456216"/>
        <dbReference type="EC" id="7.1.2.2"/>
    </reaction>
</comment>
<comment type="subunit">
    <text evidence="1">F-type ATPases have 2 components, CF(1) - the catalytic core - and CF(0) - the membrane proton channel. CF(1) has five subunits: alpha(3), beta(3), gamma(1), delta(1), epsilon(1). CF(0) has four main subunits: a(1), b(1), b'(1) and c(9-12).</text>
</comment>
<comment type="subcellular location">
    <subcellularLocation>
        <location evidence="1">Plastid</location>
        <location evidence="1">Chloroplast thylakoid membrane</location>
        <topology evidence="1">Peripheral membrane protein</topology>
    </subcellularLocation>
</comment>
<comment type="similarity">
    <text evidence="1">Belongs to the ATPase alpha/beta chains family.</text>
</comment>
<reference key="1">
    <citation type="journal article" date="1997" name="Am. J. Bot.">
        <title>Evaluation of atpB nucleotide sequences for phylogenetic studies of ferns and other pteridophytes.</title>
        <authorList>
            <person name="Wolf P.G."/>
        </authorList>
    </citation>
    <scope>NUCLEOTIDE SEQUENCE [GENOMIC DNA]</scope>
</reference>
<protein>
    <recommendedName>
        <fullName evidence="1">ATP synthase subunit beta, chloroplastic</fullName>
        <ecNumber evidence="1">7.1.2.2</ecNumber>
    </recommendedName>
    <alternativeName>
        <fullName evidence="1">ATP synthase F1 sector subunit beta</fullName>
    </alternativeName>
    <alternativeName>
        <fullName evidence="1">F-ATPase subunit beta</fullName>
    </alternativeName>
</protein>
<evidence type="ECO:0000255" key="1">
    <source>
        <dbReference type="HAMAP-Rule" id="MF_01347"/>
    </source>
</evidence>
<dbReference type="EC" id="7.1.2.2" evidence="1"/>
<dbReference type="EMBL" id="U93824">
    <property type="protein sequence ID" value="AAB51732.1"/>
    <property type="molecule type" value="Genomic_DNA"/>
</dbReference>
<dbReference type="SMR" id="O03069"/>
<dbReference type="GO" id="GO:0009535">
    <property type="term" value="C:chloroplast thylakoid membrane"/>
    <property type="evidence" value="ECO:0007669"/>
    <property type="project" value="UniProtKB-SubCell"/>
</dbReference>
<dbReference type="GO" id="GO:0005739">
    <property type="term" value="C:mitochondrion"/>
    <property type="evidence" value="ECO:0007669"/>
    <property type="project" value="GOC"/>
</dbReference>
<dbReference type="GO" id="GO:0045259">
    <property type="term" value="C:proton-transporting ATP synthase complex"/>
    <property type="evidence" value="ECO:0007669"/>
    <property type="project" value="UniProtKB-KW"/>
</dbReference>
<dbReference type="GO" id="GO:0005524">
    <property type="term" value="F:ATP binding"/>
    <property type="evidence" value="ECO:0007669"/>
    <property type="project" value="UniProtKB-KW"/>
</dbReference>
<dbReference type="GO" id="GO:0016887">
    <property type="term" value="F:ATP hydrolysis activity"/>
    <property type="evidence" value="ECO:0007669"/>
    <property type="project" value="InterPro"/>
</dbReference>
<dbReference type="GO" id="GO:0046933">
    <property type="term" value="F:proton-transporting ATP synthase activity, rotational mechanism"/>
    <property type="evidence" value="ECO:0007669"/>
    <property type="project" value="InterPro"/>
</dbReference>
<dbReference type="GO" id="GO:0042776">
    <property type="term" value="P:proton motive force-driven mitochondrial ATP synthesis"/>
    <property type="evidence" value="ECO:0007669"/>
    <property type="project" value="TreeGrafter"/>
</dbReference>
<dbReference type="CDD" id="cd18110">
    <property type="entry name" value="ATP-synt_F1_beta_C"/>
    <property type="match status" value="1"/>
</dbReference>
<dbReference type="CDD" id="cd18115">
    <property type="entry name" value="ATP-synt_F1_beta_N"/>
    <property type="match status" value="1"/>
</dbReference>
<dbReference type="CDD" id="cd01133">
    <property type="entry name" value="F1-ATPase_beta_CD"/>
    <property type="match status" value="1"/>
</dbReference>
<dbReference type="FunFam" id="1.10.1140.10:FF:000005">
    <property type="entry name" value="ATP synthase subunit beta"/>
    <property type="match status" value="1"/>
</dbReference>
<dbReference type="FunFam" id="3.40.50.12240:FF:000006">
    <property type="entry name" value="ATP synthase subunit beta"/>
    <property type="match status" value="1"/>
</dbReference>
<dbReference type="FunFam" id="3.40.50.300:FF:000004">
    <property type="entry name" value="ATP synthase subunit beta"/>
    <property type="match status" value="1"/>
</dbReference>
<dbReference type="FunFam" id="2.40.10.170:FF:000002">
    <property type="entry name" value="ATP synthase subunit beta, chloroplastic"/>
    <property type="match status" value="1"/>
</dbReference>
<dbReference type="Gene3D" id="2.40.10.170">
    <property type="match status" value="1"/>
</dbReference>
<dbReference type="Gene3D" id="1.10.1140.10">
    <property type="entry name" value="Bovine Mitochondrial F1-atpase, Atp Synthase Beta Chain, Chain D, domain 3"/>
    <property type="match status" value="1"/>
</dbReference>
<dbReference type="Gene3D" id="3.40.50.300">
    <property type="entry name" value="P-loop containing nucleotide triphosphate hydrolases"/>
    <property type="match status" value="1"/>
</dbReference>
<dbReference type="HAMAP" id="MF_01347">
    <property type="entry name" value="ATP_synth_beta_bact"/>
    <property type="match status" value="1"/>
</dbReference>
<dbReference type="InterPro" id="IPR003593">
    <property type="entry name" value="AAA+_ATPase"/>
</dbReference>
<dbReference type="InterPro" id="IPR055190">
    <property type="entry name" value="ATP-synt_VA_C"/>
</dbReference>
<dbReference type="InterPro" id="IPR005722">
    <property type="entry name" value="ATP_synth_F1_bsu"/>
</dbReference>
<dbReference type="InterPro" id="IPR020003">
    <property type="entry name" value="ATPase_a/bsu_AS"/>
</dbReference>
<dbReference type="InterPro" id="IPR050053">
    <property type="entry name" value="ATPase_alpha/beta_chains"/>
</dbReference>
<dbReference type="InterPro" id="IPR004100">
    <property type="entry name" value="ATPase_F1/V1/A1_a/bsu_N"/>
</dbReference>
<dbReference type="InterPro" id="IPR036121">
    <property type="entry name" value="ATPase_F1/V1/A1_a/bsu_N_sf"/>
</dbReference>
<dbReference type="InterPro" id="IPR000194">
    <property type="entry name" value="ATPase_F1/V1/A1_a/bsu_nucl-bd"/>
</dbReference>
<dbReference type="InterPro" id="IPR024034">
    <property type="entry name" value="ATPase_F1/V1_b/a_C"/>
</dbReference>
<dbReference type="InterPro" id="IPR027417">
    <property type="entry name" value="P-loop_NTPase"/>
</dbReference>
<dbReference type="NCBIfam" id="TIGR01039">
    <property type="entry name" value="atpD"/>
    <property type="match status" value="1"/>
</dbReference>
<dbReference type="PANTHER" id="PTHR15184">
    <property type="entry name" value="ATP SYNTHASE"/>
    <property type="match status" value="1"/>
</dbReference>
<dbReference type="PANTHER" id="PTHR15184:SF71">
    <property type="entry name" value="ATP SYNTHASE SUBUNIT BETA, MITOCHONDRIAL"/>
    <property type="match status" value="1"/>
</dbReference>
<dbReference type="Pfam" id="PF00006">
    <property type="entry name" value="ATP-synt_ab"/>
    <property type="match status" value="1"/>
</dbReference>
<dbReference type="Pfam" id="PF02874">
    <property type="entry name" value="ATP-synt_ab_N"/>
    <property type="match status" value="1"/>
</dbReference>
<dbReference type="Pfam" id="PF22919">
    <property type="entry name" value="ATP-synt_VA_C"/>
    <property type="match status" value="1"/>
</dbReference>
<dbReference type="SMART" id="SM00382">
    <property type="entry name" value="AAA"/>
    <property type="match status" value="1"/>
</dbReference>
<dbReference type="SUPFAM" id="SSF47917">
    <property type="entry name" value="C-terminal domain of alpha and beta subunits of F1 ATP synthase"/>
    <property type="match status" value="1"/>
</dbReference>
<dbReference type="SUPFAM" id="SSF50615">
    <property type="entry name" value="N-terminal domain of alpha and beta subunits of F1 ATP synthase"/>
    <property type="match status" value="1"/>
</dbReference>
<dbReference type="SUPFAM" id="SSF52540">
    <property type="entry name" value="P-loop containing nucleoside triphosphate hydrolases"/>
    <property type="match status" value="1"/>
</dbReference>
<dbReference type="PROSITE" id="PS00152">
    <property type="entry name" value="ATPASE_ALPHA_BETA"/>
    <property type="match status" value="1"/>
</dbReference>
<organism>
    <name type="scientific">Equisetum arvense</name>
    <name type="common">Field horsetail</name>
    <name type="synonym">Common horsetail</name>
    <dbReference type="NCBI Taxonomy" id="3258"/>
    <lineage>
        <taxon>Eukaryota</taxon>
        <taxon>Viridiplantae</taxon>
        <taxon>Streptophyta</taxon>
        <taxon>Embryophyta</taxon>
        <taxon>Tracheophyta</taxon>
        <taxon>Polypodiopsida</taxon>
        <taxon>Equisetidae</taxon>
        <taxon>Equisetales</taxon>
        <taxon>Equisetaceae</taxon>
        <taxon>Equisetum</taxon>
    </lineage>
</organism>
<proteinExistence type="inferred from homology"/>